<accession>A1SJK4</accession>
<keyword id="KW-0067">ATP-binding</keyword>
<keyword id="KW-0315">Glutamine amidotransferase</keyword>
<keyword id="KW-0436">Ligase</keyword>
<keyword id="KW-0460">Magnesium</keyword>
<keyword id="KW-0479">Metal-binding</keyword>
<keyword id="KW-0547">Nucleotide-binding</keyword>
<keyword id="KW-0665">Pyrimidine biosynthesis</keyword>
<keyword id="KW-1185">Reference proteome</keyword>
<comment type="function">
    <text evidence="1">Catalyzes the ATP-dependent amination of UTP to CTP with either L-glutamine or ammonia as the source of nitrogen. Regulates intracellular CTP levels through interactions with the four ribonucleotide triphosphates.</text>
</comment>
<comment type="catalytic activity">
    <reaction evidence="1">
        <text>UTP + L-glutamine + ATP + H2O = CTP + L-glutamate + ADP + phosphate + 2 H(+)</text>
        <dbReference type="Rhea" id="RHEA:26426"/>
        <dbReference type="ChEBI" id="CHEBI:15377"/>
        <dbReference type="ChEBI" id="CHEBI:15378"/>
        <dbReference type="ChEBI" id="CHEBI:29985"/>
        <dbReference type="ChEBI" id="CHEBI:30616"/>
        <dbReference type="ChEBI" id="CHEBI:37563"/>
        <dbReference type="ChEBI" id="CHEBI:43474"/>
        <dbReference type="ChEBI" id="CHEBI:46398"/>
        <dbReference type="ChEBI" id="CHEBI:58359"/>
        <dbReference type="ChEBI" id="CHEBI:456216"/>
        <dbReference type="EC" id="6.3.4.2"/>
    </reaction>
</comment>
<comment type="catalytic activity">
    <reaction evidence="1">
        <text>L-glutamine + H2O = L-glutamate + NH4(+)</text>
        <dbReference type="Rhea" id="RHEA:15889"/>
        <dbReference type="ChEBI" id="CHEBI:15377"/>
        <dbReference type="ChEBI" id="CHEBI:28938"/>
        <dbReference type="ChEBI" id="CHEBI:29985"/>
        <dbReference type="ChEBI" id="CHEBI:58359"/>
    </reaction>
</comment>
<comment type="catalytic activity">
    <reaction evidence="1">
        <text>UTP + NH4(+) + ATP = CTP + ADP + phosphate + 2 H(+)</text>
        <dbReference type="Rhea" id="RHEA:16597"/>
        <dbReference type="ChEBI" id="CHEBI:15378"/>
        <dbReference type="ChEBI" id="CHEBI:28938"/>
        <dbReference type="ChEBI" id="CHEBI:30616"/>
        <dbReference type="ChEBI" id="CHEBI:37563"/>
        <dbReference type="ChEBI" id="CHEBI:43474"/>
        <dbReference type="ChEBI" id="CHEBI:46398"/>
        <dbReference type="ChEBI" id="CHEBI:456216"/>
    </reaction>
</comment>
<comment type="activity regulation">
    <text evidence="1">Allosterically activated by GTP, when glutamine is the substrate; GTP has no effect on the reaction when ammonia is the substrate. The allosteric effector GTP functions by stabilizing the protein conformation that binds the tetrahedral intermediate(s) formed during glutamine hydrolysis. Inhibited by the product CTP, via allosteric rather than competitive inhibition.</text>
</comment>
<comment type="pathway">
    <text evidence="1">Pyrimidine metabolism; CTP biosynthesis via de novo pathway; CTP from UDP: step 2/2.</text>
</comment>
<comment type="subunit">
    <text evidence="1">Homotetramer.</text>
</comment>
<comment type="miscellaneous">
    <text evidence="1">CTPSs have evolved a hybrid strategy for distinguishing between UTP and CTP. The overlapping regions of the product feedback inhibitory and substrate sites recognize a common feature in both compounds, the triphosphate moiety. To differentiate isosteric substrate and product pyrimidine rings, an additional pocket far from the expected kinase/ligase catalytic site, specifically recognizes the cytosine and ribose portions of the product inhibitor.</text>
</comment>
<comment type="similarity">
    <text evidence="1">Belongs to the CTP synthase family.</text>
</comment>
<name>PYRG_NOCSJ</name>
<feature type="chain" id="PRO_1000139507" description="CTP synthase">
    <location>
        <begin position="1"/>
        <end position="569"/>
    </location>
</feature>
<feature type="domain" description="Glutamine amidotransferase type-1" evidence="1">
    <location>
        <begin position="301"/>
        <end position="550"/>
    </location>
</feature>
<feature type="region of interest" description="Amidoligase domain" evidence="1">
    <location>
        <begin position="1"/>
        <end position="276"/>
    </location>
</feature>
<feature type="active site" description="Nucleophile; for glutamine hydrolysis" evidence="1">
    <location>
        <position position="391"/>
    </location>
</feature>
<feature type="active site" evidence="1">
    <location>
        <position position="523"/>
    </location>
</feature>
<feature type="active site" evidence="1">
    <location>
        <position position="525"/>
    </location>
</feature>
<feature type="binding site" evidence="1">
    <location>
        <position position="18"/>
    </location>
    <ligand>
        <name>CTP</name>
        <dbReference type="ChEBI" id="CHEBI:37563"/>
        <note>allosteric inhibitor</note>
    </ligand>
</feature>
<feature type="binding site" evidence="1">
    <location>
        <position position="18"/>
    </location>
    <ligand>
        <name>UTP</name>
        <dbReference type="ChEBI" id="CHEBI:46398"/>
    </ligand>
</feature>
<feature type="binding site" evidence="1">
    <location>
        <begin position="19"/>
        <end position="24"/>
    </location>
    <ligand>
        <name>ATP</name>
        <dbReference type="ChEBI" id="CHEBI:30616"/>
    </ligand>
</feature>
<feature type="binding site" evidence="1">
    <location>
        <position position="76"/>
    </location>
    <ligand>
        <name>ATP</name>
        <dbReference type="ChEBI" id="CHEBI:30616"/>
    </ligand>
</feature>
<feature type="binding site" evidence="1">
    <location>
        <position position="76"/>
    </location>
    <ligand>
        <name>Mg(2+)</name>
        <dbReference type="ChEBI" id="CHEBI:18420"/>
    </ligand>
</feature>
<feature type="binding site" evidence="1">
    <location>
        <position position="150"/>
    </location>
    <ligand>
        <name>Mg(2+)</name>
        <dbReference type="ChEBI" id="CHEBI:18420"/>
    </ligand>
</feature>
<feature type="binding site" evidence="1">
    <location>
        <begin position="157"/>
        <end position="159"/>
    </location>
    <ligand>
        <name>CTP</name>
        <dbReference type="ChEBI" id="CHEBI:37563"/>
        <note>allosteric inhibitor</note>
    </ligand>
</feature>
<feature type="binding site" evidence="1">
    <location>
        <begin position="197"/>
        <end position="202"/>
    </location>
    <ligand>
        <name>CTP</name>
        <dbReference type="ChEBI" id="CHEBI:37563"/>
        <note>allosteric inhibitor</note>
    </ligand>
</feature>
<feature type="binding site" evidence="1">
    <location>
        <begin position="197"/>
        <end position="202"/>
    </location>
    <ligand>
        <name>UTP</name>
        <dbReference type="ChEBI" id="CHEBI:46398"/>
    </ligand>
</feature>
<feature type="binding site" evidence="1">
    <location>
        <position position="233"/>
    </location>
    <ligand>
        <name>CTP</name>
        <dbReference type="ChEBI" id="CHEBI:37563"/>
        <note>allosteric inhibitor</note>
    </ligand>
</feature>
<feature type="binding site" evidence="1">
    <location>
        <position position="233"/>
    </location>
    <ligand>
        <name>UTP</name>
        <dbReference type="ChEBI" id="CHEBI:46398"/>
    </ligand>
</feature>
<feature type="binding site" evidence="1">
    <location>
        <position position="364"/>
    </location>
    <ligand>
        <name>L-glutamine</name>
        <dbReference type="ChEBI" id="CHEBI:58359"/>
    </ligand>
</feature>
<feature type="binding site" evidence="1">
    <location>
        <begin position="392"/>
        <end position="395"/>
    </location>
    <ligand>
        <name>L-glutamine</name>
        <dbReference type="ChEBI" id="CHEBI:58359"/>
    </ligand>
</feature>
<feature type="binding site" evidence="1">
    <location>
        <position position="415"/>
    </location>
    <ligand>
        <name>L-glutamine</name>
        <dbReference type="ChEBI" id="CHEBI:58359"/>
    </ligand>
</feature>
<feature type="binding site" evidence="1">
    <location>
        <position position="476"/>
    </location>
    <ligand>
        <name>L-glutamine</name>
        <dbReference type="ChEBI" id="CHEBI:58359"/>
    </ligand>
</feature>
<evidence type="ECO:0000255" key="1">
    <source>
        <dbReference type="HAMAP-Rule" id="MF_01227"/>
    </source>
</evidence>
<proteinExistence type="inferred from homology"/>
<organism>
    <name type="scientific">Nocardioides sp. (strain ATCC BAA-499 / JS614)</name>
    <dbReference type="NCBI Taxonomy" id="196162"/>
    <lineage>
        <taxon>Bacteria</taxon>
        <taxon>Bacillati</taxon>
        <taxon>Actinomycetota</taxon>
        <taxon>Actinomycetes</taxon>
        <taxon>Propionibacteriales</taxon>
        <taxon>Nocardioidaceae</taxon>
        <taxon>Nocardioides</taxon>
    </lineage>
</organism>
<dbReference type="EC" id="6.3.4.2" evidence="1"/>
<dbReference type="EMBL" id="CP000509">
    <property type="protein sequence ID" value="ABL81989.1"/>
    <property type="molecule type" value="Genomic_DNA"/>
</dbReference>
<dbReference type="RefSeq" id="WP_011755930.1">
    <property type="nucleotide sequence ID" value="NC_008699.1"/>
</dbReference>
<dbReference type="SMR" id="A1SJK4"/>
<dbReference type="STRING" id="196162.Noca_2485"/>
<dbReference type="KEGG" id="nca:Noca_2485"/>
<dbReference type="eggNOG" id="COG0504">
    <property type="taxonomic scope" value="Bacteria"/>
</dbReference>
<dbReference type="HOGENOM" id="CLU_011675_5_0_11"/>
<dbReference type="OrthoDB" id="9801107at2"/>
<dbReference type="UniPathway" id="UPA00159">
    <property type="reaction ID" value="UER00277"/>
</dbReference>
<dbReference type="Proteomes" id="UP000000640">
    <property type="component" value="Chromosome"/>
</dbReference>
<dbReference type="GO" id="GO:0005829">
    <property type="term" value="C:cytosol"/>
    <property type="evidence" value="ECO:0007669"/>
    <property type="project" value="TreeGrafter"/>
</dbReference>
<dbReference type="GO" id="GO:0005524">
    <property type="term" value="F:ATP binding"/>
    <property type="evidence" value="ECO:0007669"/>
    <property type="project" value="UniProtKB-KW"/>
</dbReference>
<dbReference type="GO" id="GO:0003883">
    <property type="term" value="F:CTP synthase activity"/>
    <property type="evidence" value="ECO:0007669"/>
    <property type="project" value="UniProtKB-UniRule"/>
</dbReference>
<dbReference type="GO" id="GO:0004359">
    <property type="term" value="F:glutaminase activity"/>
    <property type="evidence" value="ECO:0007669"/>
    <property type="project" value="RHEA"/>
</dbReference>
<dbReference type="GO" id="GO:0042802">
    <property type="term" value="F:identical protein binding"/>
    <property type="evidence" value="ECO:0007669"/>
    <property type="project" value="TreeGrafter"/>
</dbReference>
<dbReference type="GO" id="GO:0046872">
    <property type="term" value="F:metal ion binding"/>
    <property type="evidence" value="ECO:0007669"/>
    <property type="project" value="UniProtKB-KW"/>
</dbReference>
<dbReference type="GO" id="GO:0044210">
    <property type="term" value="P:'de novo' CTP biosynthetic process"/>
    <property type="evidence" value="ECO:0007669"/>
    <property type="project" value="UniProtKB-UniRule"/>
</dbReference>
<dbReference type="GO" id="GO:0019856">
    <property type="term" value="P:pyrimidine nucleobase biosynthetic process"/>
    <property type="evidence" value="ECO:0007669"/>
    <property type="project" value="TreeGrafter"/>
</dbReference>
<dbReference type="CDD" id="cd03113">
    <property type="entry name" value="CTPS_N"/>
    <property type="match status" value="1"/>
</dbReference>
<dbReference type="CDD" id="cd01746">
    <property type="entry name" value="GATase1_CTP_Synthase"/>
    <property type="match status" value="1"/>
</dbReference>
<dbReference type="FunFam" id="3.40.50.300:FF:000009">
    <property type="entry name" value="CTP synthase"/>
    <property type="match status" value="1"/>
</dbReference>
<dbReference type="FunFam" id="3.40.50.880:FF:000002">
    <property type="entry name" value="CTP synthase"/>
    <property type="match status" value="1"/>
</dbReference>
<dbReference type="Gene3D" id="3.40.50.880">
    <property type="match status" value="1"/>
</dbReference>
<dbReference type="Gene3D" id="3.40.50.300">
    <property type="entry name" value="P-loop containing nucleotide triphosphate hydrolases"/>
    <property type="match status" value="1"/>
</dbReference>
<dbReference type="HAMAP" id="MF_01227">
    <property type="entry name" value="PyrG"/>
    <property type="match status" value="1"/>
</dbReference>
<dbReference type="InterPro" id="IPR029062">
    <property type="entry name" value="Class_I_gatase-like"/>
</dbReference>
<dbReference type="InterPro" id="IPR004468">
    <property type="entry name" value="CTP_synthase"/>
</dbReference>
<dbReference type="InterPro" id="IPR017456">
    <property type="entry name" value="CTP_synthase_N"/>
</dbReference>
<dbReference type="InterPro" id="IPR017926">
    <property type="entry name" value="GATASE"/>
</dbReference>
<dbReference type="InterPro" id="IPR033828">
    <property type="entry name" value="GATase1_CTP_Synthase"/>
</dbReference>
<dbReference type="InterPro" id="IPR027417">
    <property type="entry name" value="P-loop_NTPase"/>
</dbReference>
<dbReference type="NCBIfam" id="NF003792">
    <property type="entry name" value="PRK05380.1"/>
    <property type="match status" value="1"/>
</dbReference>
<dbReference type="NCBIfam" id="TIGR00337">
    <property type="entry name" value="PyrG"/>
    <property type="match status" value="1"/>
</dbReference>
<dbReference type="PANTHER" id="PTHR11550">
    <property type="entry name" value="CTP SYNTHASE"/>
    <property type="match status" value="1"/>
</dbReference>
<dbReference type="PANTHER" id="PTHR11550:SF0">
    <property type="entry name" value="CTP SYNTHASE-RELATED"/>
    <property type="match status" value="1"/>
</dbReference>
<dbReference type="Pfam" id="PF06418">
    <property type="entry name" value="CTP_synth_N"/>
    <property type="match status" value="1"/>
</dbReference>
<dbReference type="Pfam" id="PF00117">
    <property type="entry name" value="GATase"/>
    <property type="match status" value="1"/>
</dbReference>
<dbReference type="SUPFAM" id="SSF52317">
    <property type="entry name" value="Class I glutamine amidotransferase-like"/>
    <property type="match status" value="1"/>
</dbReference>
<dbReference type="SUPFAM" id="SSF52540">
    <property type="entry name" value="P-loop containing nucleoside triphosphate hydrolases"/>
    <property type="match status" value="1"/>
</dbReference>
<dbReference type="PROSITE" id="PS51273">
    <property type="entry name" value="GATASE_TYPE_1"/>
    <property type="match status" value="1"/>
</dbReference>
<sequence length="569" mass="62262">MNQATPTKHVFVTGGVASSLGKGLTASSLGSLLRSRGLRVTMQKLDPYLNVDPGTMNPFQHGEVFVTNDGAETDLDIGHYERFLDTDLSQIANVTTGQVYSSVIAKERRGDYLGDTVQVIPHITNEIKERILAMGGTGEDGRSVDVVITEVGGTVGDIESLPFLEAARQVRHDIGRENCFFLHVSLVPYIGPSGELKTKPTQHSVAALRQVGIQPDAVVCRADRELPPSIKKKISLMCDVDQDAVVTCADAPSIYDIPKVLHREGLDAYLVRRLDLPFRDVDWTVWDDLLRRVHHPKEEVTVALVGKYVDLPDAYLSVAEALRAGGFAHEAKVQLRWVASDECQTAAGAARNLQDVDAICVPGGFGVRGIEGKLGALTYARTHGIPTLGLCLGLQCMVIEYARNVVGLEKAGSTEFDPDTPEPVIATMAEQKAFVEGAGDLGGTMRLGLYPAALKDGSIAREVYGSSLIEERHRHRYEVNNAYRDQLEEAGLVFSGTSPDNSLVEYVELPRDTHPYYISTQAHPELRSRPTRPHPLFAGLVGAAIERQRELRFPIDETGLRREPEPDED</sequence>
<reference key="1">
    <citation type="submission" date="2006-12" db="EMBL/GenBank/DDBJ databases">
        <title>Complete sequence of chromosome 1 of Nocardioides sp. JS614.</title>
        <authorList>
            <person name="Copeland A."/>
            <person name="Lucas S."/>
            <person name="Lapidus A."/>
            <person name="Barry K."/>
            <person name="Detter J.C."/>
            <person name="Glavina del Rio T."/>
            <person name="Hammon N."/>
            <person name="Israni S."/>
            <person name="Dalin E."/>
            <person name="Tice H."/>
            <person name="Pitluck S."/>
            <person name="Thompson L.S."/>
            <person name="Brettin T."/>
            <person name="Bruce D."/>
            <person name="Han C."/>
            <person name="Tapia R."/>
            <person name="Schmutz J."/>
            <person name="Larimer F."/>
            <person name="Land M."/>
            <person name="Hauser L."/>
            <person name="Kyrpides N."/>
            <person name="Kim E."/>
            <person name="Mattes T."/>
            <person name="Gossett J."/>
            <person name="Richardson P."/>
        </authorList>
    </citation>
    <scope>NUCLEOTIDE SEQUENCE [LARGE SCALE GENOMIC DNA]</scope>
    <source>
        <strain>ATCC BAA-499 / JS614</strain>
    </source>
</reference>
<gene>
    <name evidence="1" type="primary">pyrG</name>
    <name type="ordered locus">Noca_2485</name>
</gene>
<protein>
    <recommendedName>
        <fullName evidence="1">CTP synthase</fullName>
        <ecNumber evidence="1">6.3.4.2</ecNumber>
    </recommendedName>
    <alternativeName>
        <fullName evidence="1">Cytidine 5'-triphosphate synthase</fullName>
    </alternativeName>
    <alternativeName>
        <fullName evidence="1">Cytidine triphosphate synthetase</fullName>
        <shortName evidence="1">CTP synthetase</shortName>
        <shortName evidence="1">CTPS</shortName>
    </alternativeName>
    <alternativeName>
        <fullName evidence="1">UTP--ammonia ligase</fullName>
    </alternativeName>
</protein>